<sequence>MARGQQKIQSQQKNAKKQAEQKKKQGHDQKAAAKAALIYTCTVCRTQMPDPKTFKQHFESKHPKTPLPPELADVQA</sequence>
<gene>
    <name evidence="2" type="primary">ZNF706</name>
    <name evidence="4" type="ORF">RCJMB04_1j21</name>
</gene>
<protein>
    <recommendedName>
        <fullName evidence="5">Zinc finger protein 706</fullName>
    </recommendedName>
</protein>
<proteinExistence type="inferred from homology"/>
<comment type="function">
    <text evidence="1">Transcription repressor involved in the exit of embryonic stem cells (ESCs) from self-renewal.</text>
</comment>
<comment type="subcellular location">
    <subcellularLocation>
        <location evidence="1">Cytoplasm</location>
    </subcellularLocation>
    <subcellularLocation>
        <location evidence="1">Nucleus</location>
    </subcellularLocation>
</comment>
<accession>Q5ZMM5</accession>
<dbReference type="EMBL" id="AJ719359">
    <property type="protein sequence ID" value="CAG31018.1"/>
    <property type="molecule type" value="mRNA"/>
</dbReference>
<dbReference type="RefSeq" id="NP_001091000.1">
    <property type="nucleotide sequence ID" value="NM_001097531.3"/>
</dbReference>
<dbReference type="RefSeq" id="XP_025003115.1">
    <property type="nucleotide sequence ID" value="XM_025147347.3"/>
</dbReference>
<dbReference type="RefSeq" id="XP_025003116.1">
    <property type="nucleotide sequence ID" value="XM_025147348.3"/>
</dbReference>
<dbReference type="RefSeq" id="XP_046767703.1">
    <property type="nucleotide sequence ID" value="XM_046911747.1"/>
</dbReference>
<dbReference type="RefSeq" id="XP_046767704.1">
    <property type="nucleotide sequence ID" value="XM_046911748.1"/>
</dbReference>
<dbReference type="RefSeq" id="XP_046767705.1">
    <property type="nucleotide sequence ID" value="XM_046911749.1"/>
</dbReference>
<dbReference type="RefSeq" id="XP_046782453.1">
    <property type="nucleotide sequence ID" value="XM_046926497.1"/>
</dbReference>
<dbReference type="FunCoup" id="Q5ZMM5">
    <property type="interactions" value="557"/>
</dbReference>
<dbReference type="STRING" id="9031.ENSGALP00000071867"/>
<dbReference type="PaxDb" id="9031-ENSGALP00000042800"/>
<dbReference type="Ensembl" id="ENSGALT00010028111.1">
    <property type="protein sequence ID" value="ENSGALP00010016124.1"/>
    <property type="gene ID" value="ENSGALG00010011751.1"/>
</dbReference>
<dbReference type="Ensembl" id="ENSGALT00010028118.1">
    <property type="protein sequence ID" value="ENSGALP00010016126.1"/>
    <property type="gene ID" value="ENSGALG00010011751.1"/>
</dbReference>
<dbReference type="GeneID" id="768824"/>
<dbReference type="KEGG" id="gga:768824"/>
<dbReference type="CTD" id="51123"/>
<dbReference type="VEuPathDB" id="HostDB:geneid_768824"/>
<dbReference type="eggNOG" id="KOG4118">
    <property type="taxonomic scope" value="Eukaryota"/>
</dbReference>
<dbReference type="GeneTree" id="ENSGT00390000003465"/>
<dbReference type="HOGENOM" id="CLU_176397_0_0_1"/>
<dbReference type="InParanoid" id="Q5ZMM5"/>
<dbReference type="OMA" id="CDQKGAA"/>
<dbReference type="OrthoDB" id="73348at2759"/>
<dbReference type="PhylomeDB" id="Q5ZMM5"/>
<dbReference type="TreeFam" id="TF315171"/>
<dbReference type="Reactome" id="R-GGA-212436">
    <property type="pathway name" value="Generic Transcription Pathway"/>
</dbReference>
<dbReference type="PRO" id="PR:Q5ZMM5"/>
<dbReference type="Proteomes" id="UP000000539">
    <property type="component" value="Chromosome 2"/>
</dbReference>
<dbReference type="Bgee" id="ENSGALG00000041200">
    <property type="expression patterns" value="Expressed in ovary and 14 other cell types or tissues"/>
</dbReference>
<dbReference type="GO" id="GO:0005737">
    <property type="term" value="C:cytoplasm"/>
    <property type="evidence" value="ECO:0000250"/>
    <property type="project" value="UniProtKB"/>
</dbReference>
<dbReference type="GO" id="GO:0005634">
    <property type="term" value="C:nucleus"/>
    <property type="evidence" value="ECO:0000250"/>
    <property type="project" value="UniProtKB"/>
</dbReference>
<dbReference type="GO" id="GO:0008270">
    <property type="term" value="F:zinc ion binding"/>
    <property type="evidence" value="ECO:0007669"/>
    <property type="project" value="UniProtKB-KW"/>
</dbReference>
<dbReference type="GO" id="GO:0045892">
    <property type="term" value="P:negative regulation of DNA-templated transcription"/>
    <property type="evidence" value="ECO:0000250"/>
    <property type="project" value="UniProtKB"/>
</dbReference>
<dbReference type="GO" id="GO:1902455">
    <property type="term" value="P:negative regulation of stem cell population maintenance"/>
    <property type="evidence" value="ECO:0000250"/>
    <property type="project" value="UniProtKB"/>
</dbReference>
<dbReference type="GO" id="GO:0006417">
    <property type="term" value="P:regulation of translation"/>
    <property type="evidence" value="ECO:0007669"/>
    <property type="project" value="UniProtKB-KW"/>
</dbReference>
<dbReference type="FunFam" id="4.10.1050.10:FF:000001">
    <property type="entry name" value="Zinc finger protein 706"/>
    <property type="match status" value="1"/>
</dbReference>
<dbReference type="Gene3D" id="4.10.1050.10">
    <property type="entry name" value="At2g23090-like"/>
    <property type="match status" value="1"/>
</dbReference>
<dbReference type="InterPro" id="IPR045230">
    <property type="entry name" value="MBS1/2-like"/>
</dbReference>
<dbReference type="InterPro" id="IPR007513">
    <property type="entry name" value="SERF-like_N"/>
</dbReference>
<dbReference type="InterPro" id="IPR026939">
    <property type="entry name" value="ZNF706/At2g23090_sf"/>
</dbReference>
<dbReference type="InterPro" id="IPR013087">
    <property type="entry name" value="Znf_C2H2_type"/>
</dbReference>
<dbReference type="PANTHER" id="PTHR21213">
    <property type="entry name" value="GEO09665P1-RELATED"/>
    <property type="match status" value="1"/>
</dbReference>
<dbReference type="PANTHER" id="PTHR21213:SF0">
    <property type="entry name" value="ZINC FINGER PROTEIN 706"/>
    <property type="match status" value="1"/>
</dbReference>
<dbReference type="Pfam" id="PF04419">
    <property type="entry name" value="SERF-like_N"/>
    <property type="match status" value="1"/>
</dbReference>
<dbReference type="Pfam" id="PF12874">
    <property type="entry name" value="zf-met"/>
    <property type="match status" value="1"/>
</dbReference>
<dbReference type="SUPFAM" id="SSF118359">
    <property type="entry name" value="Expressed protein At2g23090/F21P24.15"/>
    <property type="match status" value="1"/>
</dbReference>
<dbReference type="PROSITE" id="PS00028">
    <property type="entry name" value="ZINC_FINGER_C2H2_1"/>
    <property type="match status" value="1"/>
</dbReference>
<name>ZN706_CHICK</name>
<evidence type="ECO:0000250" key="1">
    <source>
        <dbReference type="UniProtKB" id="Q9D115"/>
    </source>
</evidence>
<evidence type="ECO:0000250" key="2">
    <source>
        <dbReference type="UniProtKB" id="Q9Y5V0"/>
    </source>
</evidence>
<evidence type="ECO:0000256" key="3">
    <source>
        <dbReference type="SAM" id="MobiDB-lite"/>
    </source>
</evidence>
<evidence type="ECO:0000303" key="4">
    <source>
    </source>
</evidence>
<evidence type="ECO:0000305" key="5"/>
<feature type="chain" id="PRO_0000047705" description="Zinc finger protein 706">
    <location>
        <begin position="1"/>
        <end position="76"/>
    </location>
</feature>
<feature type="zinc finger region" description="C2H2-type">
    <location>
        <begin position="39"/>
        <end position="62"/>
    </location>
</feature>
<feature type="region of interest" description="Disordered" evidence="3">
    <location>
        <begin position="1"/>
        <end position="32"/>
    </location>
</feature>
<feature type="region of interest" description="Disordered" evidence="3">
    <location>
        <begin position="53"/>
        <end position="76"/>
    </location>
</feature>
<feature type="compositionally biased region" description="Low complexity" evidence="3">
    <location>
        <begin position="1"/>
        <end position="13"/>
    </location>
</feature>
<feature type="compositionally biased region" description="Basic and acidic residues" evidence="3">
    <location>
        <begin position="17"/>
        <end position="31"/>
    </location>
</feature>
<feature type="compositionally biased region" description="Basic and acidic residues" evidence="3">
    <location>
        <begin position="53"/>
        <end position="62"/>
    </location>
</feature>
<organism>
    <name type="scientific">Gallus gallus</name>
    <name type="common">Chicken</name>
    <dbReference type="NCBI Taxonomy" id="9031"/>
    <lineage>
        <taxon>Eukaryota</taxon>
        <taxon>Metazoa</taxon>
        <taxon>Chordata</taxon>
        <taxon>Craniata</taxon>
        <taxon>Vertebrata</taxon>
        <taxon>Euteleostomi</taxon>
        <taxon>Archelosauria</taxon>
        <taxon>Archosauria</taxon>
        <taxon>Dinosauria</taxon>
        <taxon>Saurischia</taxon>
        <taxon>Theropoda</taxon>
        <taxon>Coelurosauria</taxon>
        <taxon>Aves</taxon>
        <taxon>Neognathae</taxon>
        <taxon>Galloanserae</taxon>
        <taxon>Galliformes</taxon>
        <taxon>Phasianidae</taxon>
        <taxon>Phasianinae</taxon>
        <taxon>Gallus</taxon>
    </lineage>
</organism>
<reference key="1">
    <citation type="journal article" date="2005" name="Genome Biol.">
        <title>Full-length cDNAs from chicken bursal lymphocytes to facilitate gene function analysis.</title>
        <authorList>
            <person name="Caldwell R.B."/>
            <person name="Kierzek A.M."/>
            <person name="Arakawa H."/>
            <person name="Bezzubov Y."/>
            <person name="Zaim J."/>
            <person name="Fiedler P."/>
            <person name="Kutter S."/>
            <person name="Blagodatski A."/>
            <person name="Kostovska D."/>
            <person name="Koter M."/>
            <person name="Plachy J."/>
            <person name="Carninci P."/>
            <person name="Hayashizaki Y."/>
            <person name="Buerstedde J.-M."/>
        </authorList>
    </citation>
    <scope>NUCLEOTIDE SEQUENCE [LARGE SCALE MRNA]</scope>
    <source>
        <strain>CB</strain>
        <tissue>Bursa of Fabricius</tissue>
    </source>
</reference>
<keyword id="KW-0963">Cytoplasm</keyword>
<keyword id="KW-0479">Metal-binding</keyword>
<keyword id="KW-0539">Nucleus</keyword>
<keyword id="KW-1185">Reference proteome</keyword>
<keyword id="KW-0678">Repressor</keyword>
<keyword id="KW-0810">Translation regulation</keyword>
<keyword id="KW-0862">Zinc</keyword>
<keyword id="KW-0863">Zinc-finger</keyword>